<proteinExistence type="inferred from homology"/>
<feature type="chain" id="PRO_0000361865" description="Cytoskeleton protein RodZ">
    <location>
        <begin position="1"/>
        <end position="337"/>
    </location>
</feature>
<feature type="topological domain" description="Cytoplasmic" evidence="1">
    <location>
        <begin position="1"/>
        <end position="111"/>
    </location>
</feature>
<feature type="transmembrane region" description="Helical; Signal-anchor for type II membrane protein" evidence="1">
    <location>
        <begin position="112"/>
        <end position="132"/>
    </location>
</feature>
<feature type="topological domain" description="Periplasmic" evidence="1">
    <location>
        <begin position="133"/>
        <end position="337"/>
    </location>
</feature>
<feature type="domain" description="HTH cro/C1-type" evidence="1">
    <location>
        <begin position="19"/>
        <end position="71"/>
    </location>
</feature>
<feature type="DNA-binding region" description="H-T-H motif" evidence="1">
    <location>
        <begin position="30"/>
        <end position="49"/>
    </location>
</feature>
<feature type="region of interest" description="Disordered" evidence="2">
    <location>
        <begin position="145"/>
        <end position="218"/>
    </location>
</feature>
<feature type="compositionally biased region" description="Polar residues" evidence="2">
    <location>
        <begin position="145"/>
        <end position="167"/>
    </location>
</feature>
<feature type="compositionally biased region" description="Low complexity" evidence="2">
    <location>
        <begin position="168"/>
        <end position="207"/>
    </location>
</feature>
<feature type="compositionally biased region" description="Polar residues" evidence="2">
    <location>
        <begin position="208"/>
        <end position="218"/>
    </location>
</feature>
<comment type="function">
    <text evidence="1">Cytoskeletal protein that is involved in cell-shape control through regulation of the length of the long axis.</text>
</comment>
<comment type="subcellular location">
    <subcellularLocation>
        <location evidence="1">Cell inner membrane</location>
        <topology evidence="1">Single-pass type II membrane protein</topology>
    </subcellularLocation>
    <text evidence="1">Forms helical filaments along the long axis of the cell.</text>
</comment>
<comment type="domain">
    <text evidence="1">The helix-turn-helix (HTH) motif in the cytoplasmic domain of the N-terminus is involved in the formation of spirals to maintain the rigid rod shape. As this protein is anchored in the cytoplasmic membrane, the HTH motif may contribute to protein-protein interactions to form the RodZ helix, which is localized beneath the cytoplasmic membrane. The C-terminal domain may be critical for determination of the rod shape by probably interacting with enzymes required for synthesis of the peptidoglycan layer, including PBPs in the periplasm.</text>
</comment>
<comment type="similarity">
    <text evidence="1">Belongs to the RodZ family.</text>
</comment>
<organism>
    <name type="scientific">Shigella flexneri</name>
    <dbReference type="NCBI Taxonomy" id="623"/>
    <lineage>
        <taxon>Bacteria</taxon>
        <taxon>Pseudomonadati</taxon>
        <taxon>Pseudomonadota</taxon>
        <taxon>Gammaproteobacteria</taxon>
        <taxon>Enterobacterales</taxon>
        <taxon>Enterobacteriaceae</taxon>
        <taxon>Shigella</taxon>
    </lineage>
</organism>
<keyword id="KW-0997">Cell inner membrane</keyword>
<keyword id="KW-1003">Cell membrane</keyword>
<keyword id="KW-0133">Cell shape</keyword>
<keyword id="KW-0238">DNA-binding</keyword>
<keyword id="KW-0472">Membrane</keyword>
<keyword id="KW-1185">Reference proteome</keyword>
<keyword id="KW-0735">Signal-anchor</keyword>
<keyword id="KW-0812">Transmembrane</keyword>
<keyword id="KW-1133">Transmembrane helix</keyword>
<reference key="1">
    <citation type="journal article" date="2002" name="Nucleic Acids Res.">
        <title>Genome sequence of Shigella flexneri 2a: insights into pathogenicity through comparison with genomes of Escherichia coli K12 and O157.</title>
        <authorList>
            <person name="Jin Q."/>
            <person name="Yuan Z."/>
            <person name="Xu J."/>
            <person name="Wang Y."/>
            <person name="Shen Y."/>
            <person name="Lu W."/>
            <person name="Wang J."/>
            <person name="Liu H."/>
            <person name="Yang J."/>
            <person name="Yang F."/>
            <person name="Zhang X."/>
            <person name="Zhang J."/>
            <person name="Yang G."/>
            <person name="Wu H."/>
            <person name="Qu D."/>
            <person name="Dong J."/>
            <person name="Sun L."/>
            <person name="Xue Y."/>
            <person name="Zhao A."/>
            <person name="Gao Y."/>
            <person name="Zhu J."/>
            <person name="Kan B."/>
            <person name="Ding K."/>
            <person name="Chen S."/>
            <person name="Cheng H."/>
            <person name="Yao Z."/>
            <person name="He B."/>
            <person name="Chen R."/>
            <person name="Ma D."/>
            <person name="Qiang B."/>
            <person name="Wen Y."/>
            <person name="Hou Y."/>
            <person name="Yu J."/>
        </authorList>
    </citation>
    <scope>NUCLEOTIDE SEQUENCE [LARGE SCALE GENOMIC DNA]</scope>
    <source>
        <strain>301 / Serotype 2a</strain>
    </source>
</reference>
<reference key="2">
    <citation type="journal article" date="2003" name="Infect. Immun.">
        <title>Complete genome sequence and comparative genomics of Shigella flexneri serotype 2a strain 2457T.</title>
        <authorList>
            <person name="Wei J."/>
            <person name="Goldberg M.B."/>
            <person name="Burland V."/>
            <person name="Venkatesan M.M."/>
            <person name="Deng W."/>
            <person name="Fournier G."/>
            <person name="Mayhew G.F."/>
            <person name="Plunkett G. III"/>
            <person name="Rose D.J."/>
            <person name="Darling A."/>
            <person name="Mau B."/>
            <person name="Perna N.T."/>
            <person name="Payne S.M."/>
            <person name="Runyen-Janecky L.J."/>
            <person name="Zhou S."/>
            <person name="Schwartz D.C."/>
            <person name="Blattner F.R."/>
        </authorList>
    </citation>
    <scope>NUCLEOTIDE SEQUENCE [LARGE SCALE GENOMIC DNA]</scope>
    <source>
        <strain>ATCC 700930 / 2457T / Serotype 2a</strain>
    </source>
</reference>
<accession>Q83QK7</accession>
<accession>Q7C0G9</accession>
<dbReference type="EMBL" id="AE005674">
    <property type="protein sequence ID" value="AAN44062.1"/>
    <property type="molecule type" value="Genomic_DNA"/>
</dbReference>
<dbReference type="EMBL" id="AE014073">
    <property type="protein sequence ID" value="AAP17889.1"/>
    <property type="molecule type" value="Genomic_DNA"/>
</dbReference>
<dbReference type="RefSeq" id="WP_001090857.1">
    <property type="nucleotide sequence ID" value="NZ_WPGW01000078.1"/>
</dbReference>
<dbReference type="SMR" id="Q83QK7"/>
<dbReference type="STRING" id="198214.SF2562"/>
<dbReference type="PaxDb" id="198214-SF2562"/>
<dbReference type="GeneID" id="93774620"/>
<dbReference type="KEGG" id="sfl:SF2562"/>
<dbReference type="KEGG" id="sfx:S2734"/>
<dbReference type="PATRIC" id="fig|198214.7.peg.3060"/>
<dbReference type="HOGENOM" id="CLU_047530_3_1_6"/>
<dbReference type="Proteomes" id="UP000001006">
    <property type="component" value="Chromosome"/>
</dbReference>
<dbReference type="Proteomes" id="UP000002673">
    <property type="component" value="Chromosome"/>
</dbReference>
<dbReference type="GO" id="GO:0005886">
    <property type="term" value="C:plasma membrane"/>
    <property type="evidence" value="ECO:0007669"/>
    <property type="project" value="UniProtKB-SubCell"/>
</dbReference>
<dbReference type="GO" id="GO:0003677">
    <property type="term" value="F:DNA binding"/>
    <property type="evidence" value="ECO:0007669"/>
    <property type="project" value="UniProtKB-KW"/>
</dbReference>
<dbReference type="GO" id="GO:0008360">
    <property type="term" value="P:regulation of cell shape"/>
    <property type="evidence" value="ECO:0007669"/>
    <property type="project" value="UniProtKB-UniRule"/>
</dbReference>
<dbReference type="CDD" id="cd00093">
    <property type="entry name" value="HTH_XRE"/>
    <property type="match status" value="1"/>
</dbReference>
<dbReference type="FunFam" id="1.10.260.40:FF:000014">
    <property type="entry name" value="Cytoskeleton protein RodZ"/>
    <property type="match status" value="1"/>
</dbReference>
<dbReference type="Gene3D" id="1.10.260.40">
    <property type="entry name" value="lambda repressor-like DNA-binding domains"/>
    <property type="match status" value="1"/>
</dbReference>
<dbReference type="HAMAP" id="MF_02017">
    <property type="entry name" value="RodZ"/>
    <property type="match status" value="1"/>
</dbReference>
<dbReference type="InterPro" id="IPR050400">
    <property type="entry name" value="Bact_Cytoskel_RodZ"/>
</dbReference>
<dbReference type="InterPro" id="IPR001387">
    <property type="entry name" value="Cro/C1-type_HTH"/>
</dbReference>
<dbReference type="InterPro" id="IPR010982">
    <property type="entry name" value="Lambda_DNA-bd_dom_sf"/>
</dbReference>
<dbReference type="InterPro" id="IPR023690">
    <property type="entry name" value="RodZ"/>
</dbReference>
<dbReference type="InterPro" id="IPR025194">
    <property type="entry name" value="RodZ-like_C"/>
</dbReference>
<dbReference type="NCBIfam" id="NF008109">
    <property type="entry name" value="PRK10856.1"/>
    <property type="match status" value="1"/>
</dbReference>
<dbReference type="PANTHER" id="PTHR34475">
    <property type="match status" value="1"/>
</dbReference>
<dbReference type="PANTHER" id="PTHR34475:SF1">
    <property type="entry name" value="CYTOSKELETON PROTEIN RODZ"/>
    <property type="match status" value="1"/>
</dbReference>
<dbReference type="Pfam" id="PF13413">
    <property type="entry name" value="HTH_25"/>
    <property type="match status" value="1"/>
</dbReference>
<dbReference type="Pfam" id="PF13464">
    <property type="entry name" value="RodZ_C"/>
    <property type="match status" value="1"/>
</dbReference>
<dbReference type="SMART" id="SM00530">
    <property type="entry name" value="HTH_XRE"/>
    <property type="match status" value="1"/>
</dbReference>
<dbReference type="SUPFAM" id="SSF47413">
    <property type="entry name" value="lambda repressor-like DNA-binding domains"/>
    <property type="match status" value="1"/>
</dbReference>
<dbReference type="PROSITE" id="PS50943">
    <property type="entry name" value="HTH_CROC1"/>
    <property type="match status" value="1"/>
</dbReference>
<evidence type="ECO:0000255" key="1">
    <source>
        <dbReference type="HAMAP-Rule" id="MF_02017"/>
    </source>
</evidence>
<evidence type="ECO:0000256" key="2">
    <source>
        <dbReference type="SAM" id="MobiDB-lite"/>
    </source>
</evidence>
<protein>
    <recommendedName>
        <fullName evidence="1">Cytoskeleton protein RodZ</fullName>
    </recommendedName>
</protein>
<gene>
    <name evidence="1" type="primary">rodZ</name>
    <name type="ordered locus">SF2562</name>
    <name type="ordered locus">S2734</name>
</gene>
<sequence>MNTEATHDQNEALTTGARLRNAREQLGLSQQAVAERLCLKVSTVRDIEEDKAPADLASTFLRGYIRSYARLVHIPEEELLPGLEKQAPLRAAKVAPMQSFSLGKRRKKRDGWLMTFTWLVLFVVIGLSGAWWWQDHKAQQEEITTMADQSSAELSSNSEQGQSVPLNTSTTTDPATTSTPPASVDTTATNTQTPAVTAPAPAVDPQQNAVVSPSQANVDTAATPVPTAATTPDGAAPLPTDQAGVTTPAADPNALVMNFTADCWLEVTDATGKKLFSGMQRKDGNLNLTGQAPYKLKIGAPAAVQIQYQGKPVDLSRFIRTNQVARLTLNAEQSPAQ</sequence>
<name>RODZ_SHIFL</name>